<proteinExistence type="evidence at transcript level"/>
<organism>
    <name type="scientific">Mus musculus</name>
    <name type="common">Mouse</name>
    <dbReference type="NCBI Taxonomy" id="10090"/>
    <lineage>
        <taxon>Eukaryota</taxon>
        <taxon>Metazoa</taxon>
        <taxon>Chordata</taxon>
        <taxon>Craniata</taxon>
        <taxon>Vertebrata</taxon>
        <taxon>Euteleostomi</taxon>
        <taxon>Mammalia</taxon>
        <taxon>Eutheria</taxon>
        <taxon>Euarchontoglires</taxon>
        <taxon>Glires</taxon>
        <taxon>Rodentia</taxon>
        <taxon>Myomorpha</taxon>
        <taxon>Muroidea</taxon>
        <taxon>Muridae</taxon>
        <taxon>Murinae</taxon>
        <taxon>Mus</taxon>
        <taxon>Mus</taxon>
    </lineage>
</organism>
<reference key="1">
    <citation type="journal article" date="1998" name="Brain Res. Bull.">
        <title>The GABAA receptor gamma1-subunit in seizure prone (DBA/2) and resistant (C57BL/6) mice.</title>
        <authorList>
            <person name="Wang J.B."/>
            <person name="Liu Z.F."/>
            <person name="Kofuji P."/>
            <person name="Burt D.R."/>
        </authorList>
    </citation>
    <scope>NUCLEOTIDE SEQUENCE [MRNA]</scope>
    <scope>TISSUE SPECIFICITY</scope>
    <source>
        <strain>DBA/2J</strain>
        <tissue>Brain</tissue>
    </source>
</reference>
<reference key="2">
    <citation type="journal article" date="2005" name="Science">
        <title>The transcriptional landscape of the mammalian genome.</title>
        <authorList>
            <person name="Carninci P."/>
            <person name="Kasukawa T."/>
            <person name="Katayama S."/>
            <person name="Gough J."/>
            <person name="Frith M.C."/>
            <person name="Maeda N."/>
            <person name="Oyama R."/>
            <person name="Ravasi T."/>
            <person name="Lenhard B."/>
            <person name="Wells C."/>
            <person name="Kodzius R."/>
            <person name="Shimokawa K."/>
            <person name="Bajic V.B."/>
            <person name="Brenner S.E."/>
            <person name="Batalov S."/>
            <person name="Forrest A.R."/>
            <person name="Zavolan M."/>
            <person name="Davis M.J."/>
            <person name="Wilming L.G."/>
            <person name="Aidinis V."/>
            <person name="Allen J.E."/>
            <person name="Ambesi-Impiombato A."/>
            <person name="Apweiler R."/>
            <person name="Aturaliya R.N."/>
            <person name="Bailey T.L."/>
            <person name="Bansal M."/>
            <person name="Baxter L."/>
            <person name="Beisel K.W."/>
            <person name="Bersano T."/>
            <person name="Bono H."/>
            <person name="Chalk A.M."/>
            <person name="Chiu K.P."/>
            <person name="Choudhary V."/>
            <person name="Christoffels A."/>
            <person name="Clutterbuck D.R."/>
            <person name="Crowe M.L."/>
            <person name="Dalla E."/>
            <person name="Dalrymple B.P."/>
            <person name="de Bono B."/>
            <person name="Della Gatta G."/>
            <person name="di Bernardo D."/>
            <person name="Down T."/>
            <person name="Engstrom P."/>
            <person name="Fagiolini M."/>
            <person name="Faulkner G."/>
            <person name="Fletcher C.F."/>
            <person name="Fukushima T."/>
            <person name="Furuno M."/>
            <person name="Futaki S."/>
            <person name="Gariboldi M."/>
            <person name="Georgii-Hemming P."/>
            <person name="Gingeras T.R."/>
            <person name="Gojobori T."/>
            <person name="Green R.E."/>
            <person name="Gustincich S."/>
            <person name="Harbers M."/>
            <person name="Hayashi Y."/>
            <person name="Hensch T.K."/>
            <person name="Hirokawa N."/>
            <person name="Hill D."/>
            <person name="Huminiecki L."/>
            <person name="Iacono M."/>
            <person name="Ikeo K."/>
            <person name="Iwama A."/>
            <person name="Ishikawa T."/>
            <person name="Jakt M."/>
            <person name="Kanapin A."/>
            <person name="Katoh M."/>
            <person name="Kawasawa Y."/>
            <person name="Kelso J."/>
            <person name="Kitamura H."/>
            <person name="Kitano H."/>
            <person name="Kollias G."/>
            <person name="Krishnan S.P."/>
            <person name="Kruger A."/>
            <person name="Kummerfeld S.K."/>
            <person name="Kurochkin I.V."/>
            <person name="Lareau L.F."/>
            <person name="Lazarevic D."/>
            <person name="Lipovich L."/>
            <person name="Liu J."/>
            <person name="Liuni S."/>
            <person name="McWilliam S."/>
            <person name="Madan Babu M."/>
            <person name="Madera M."/>
            <person name="Marchionni L."/>
            <person name="Matsuda H."/>
            <person name="Matsuzawa S."/>
            <person name="Miki H."/>
            <person name="Mignone F."/>
            <person name="Miyake S."/>
            <person name="Morris K."/>
            <person name="Mottagui-Tabar S."/>
            <person name="Mulder N."/>
            <person name="Nakano N."/>
            <person name="Nakauchi H."/>
            <person name="Ng P."/>
            <person name="Nilsson R."/>
            <person name="Nishiguchi S."/>
            <person name="Nishikawa S."/>
            <person name="Nori F."/>
            <person name="Ohara O."/>
            <person name="Okazaki Y."/>
            <person name="Orlando V."/>
            <person name="Pang K.C."/>
            <person name="Pavan W.J."/>
            <person name="Pavesi G."/>
            <person name="Pesole G."/>
            <person name="Petrovsky N."/>
            <person name="Piazza S."/>
            <person name="Reed J."/>
            <person name="Reid J.F."/>
            <person name="Ring B.Z."/>
            <person name="Ringwald M."/>
            <person name="Rost B."/>
            <person name="Ruan Y."/>
            <person name="Salzberg S.L."/>
            <person name="Sandelin A."/>
            <person name="Schneider C."/>
            <person name="Schoenbach C."/>
            <person name="Sekiguchi K."/>
            <person name="Semple C.A."/>
            <person name="Seno S."/>
            <person name="Sessa L."/>
            <person name="Sheng Y."/>
            <person name="Shibata Y."/>
            <person name="Shimada H."/>
            <person name="Shimada K."/>
            <person name="Silva D."/>
            <person name="Sinclair B."/>
            <person name="Sperling S."/>
            <person name="Stupka E."/>
            <person name="Sugiura K."/>
            <person name="Sultana R."/>
            <person name="Takenaka Y."/>
            <person name="Taki K."/>
            <person name="Tammoja K."/>
            <person name="Tan S.L."/>
            <person name="Tang S."/>
            <person name="Taylor M.S."/>
            <person name="Tegner J."/>
            <person name="Teichmann S.A."/>
            <person name="Ueda H.R."/>
            <person name="van Nimwegen E."/>
            <person name="Verardo R."/>
            <person name="Wei C.L."/>
            <person name="Yagi K."/>
            <person name="Yamanishi H."/>
            <person name="Zabarovsky E."/>
            <person name="Zhu S."/>
            <person name="Zimmer A."/>
            <person name="Hide W."/>
            <person name="Bult C."/>
            <person name="Grimmond S.M."/>
            <person name="Teasdale R.D."/>
            <person name="Liu E.T."/>
            <person name="Brusic V."/>
            <person name="Quackenbush J."/>
            <person name="Wahlestedt C."/>
            <person name="Mattick J.S."/>
            <person name="Hume D.A."/>
            <person name="Kai C."/>
            <person name="Sasaki D."/>
            <person name="Tomaru Y."/>
            <person name="Fukuda S."/>
            <person name="Kanamori-Katayama M."/>
            <person name="Suzuki M."/>
            <person name="Aoki J."/>
            <person name="Arakawa T."/>
            <person name="Iida J."/>
            <person name="Imamura K."/>
            <person name="Itoh M."/>
            <person name="Kato T."/>
            <person name="Kawaji H."/>
            <person name="Kawagashira N."/>
            <person name="Kawashima T."/>
            <person name="Kojima M."/>
            <person name="Kondo S."/>
            <person name="Konno H."/>
            <person name="Nakano K."/>
            <person name="Ninomiya N."/>
            <person name="Nishio T."/>
            <person name="Okada M."/>
            <person name="Plessy C."/>
            <person name="Shibata K."/>
            <person name="Shiraki T."/>
            <person name="Suzuki S."/>
            <person name="Tagami M."/>
            <person name="Waki K."/>
            <person name="Watahiki A."/>
            <person name="Okamura-Oho Y."/>
            <person name="Suzuki H."/>
            <person name="Kawai J."/>
            <person name="Hayashizaki Y."/>
        </authorList>
    </citation>
    <scope>NUCLEOTIDE SEQUENCE [LARGE SCALE MRNA]</scope>
    <source>
        <strain>C57BL/6J</strain>
        <tissue>Corpus striatum</tissue>
        <tissue>Diencephalon</tissue>
        <tissue>Hippocampus</tissue>
        <tissue>Hypothalamus</tissue>
    </source>
</reference>
<reference key="3">
    <citation type="journal article" date="2009" name="PLoS Biol.">
        <title>Lineage-specific biology revealed by a finished genome assembly of the mouse.</title>
        <authorList>
            <person name="Church D.M."/>
            <person name="Goodstadt L."/>
            <person name="Hillier L.W."/>
            <person name="Zody M.C."/>
            <person name="Goldstein S."/>
            <person name="She X."/>
            <person name="Bult C.J."/>
            <person name="Agarwala R."/>
            <person name="Cherry J.L."/>
            <person name="DiCuccio M."/>
            <person name="Hlavina W."/>
            <person name="Kapustin Y."/>
            <person name="Meric P."/>
            <person name="Maglott D."/>
            <person name="Birtle Z."/>
            <person name="Marques A.C."/>
            <person name="Graves T."/>
            <person name="Zhou S."/>
            <person name="Teague B."/>
            <person name="Potamousis K."/>
            <person name="Churas C."/>
            <person name="Place M."/>
            <person name="Herschleb J."/>
            <person name="Runnheim R."/>
            <person name="Forrest D."/>
            <person name="Amos-Landgraf J."/>
            <person name="Schwartz D.C."/>
            <person name="Cheng Z."/>
            <person name="Lindblad-Toh K."/>
            <person name="Eichler E.E."/>
            <person name="Ponting C.P."/>
        </authorList>
    </citation>
    <scope>NUCLEOTIDE SEQUENCE [LARGE SCALE GENOMIC DNA]</scope>
    <source>
        <strain>C57BL/6J</strain>
    </source>
</reference>
<reference key="4">
    <citation type="submission" date="2005-07" db="EMBL/GenBank/DDBJ databases">
        <authorList>
            <person name="Mural R.J."/>
            <person name="Adams M.D."/>
            <person name="Myers E.W."/>
            <person name="Smith H.O."/>
            <person name="Venter J.C."/>
        </authorList>
    </citation>
    <scope>NUCLEOTIDE SEQUENCE [LARGE SCALE GENOMIC DNA]</scope>
</reference>
<reference key="5">
    <citation type="journal article" date="2004" name="Genome Res.">
        <title>The status, quality, and expansion of the NIH full-length cDNA project: the Mammalian Gene Collection (MGC).</title>
        <authorList>
            <consortium name="The MGC Project Team"/>
        </authorList>
    </citation>
    <scope>NUCLEOTIDE SEQUENCE [LARGE SCALE MRNA]</scope>
    <source>
        <strain>CD-1</strain>
        <tissue>Neural stem cell</tissue>
    </source>
</reference>
<sequence>MGSGKAFLFSPSLLWSQTRGVRLIFLLLTLHLGNCVDKADDEDDEDLTMNKTWVLAPKIHEGDITQILNSLLQGYDNKLRPDIGVRPTVIETDVYVNSIGPVDPINMEYTIDIIFAQTWFDSRLKFNSTMKVLMLNSNMVGKIWIPDTFFRNSRKSDAHWITTPNRLLRIWSDGRVLYTLRLTINAECYLQLHNFPMDEHSCPLEFSSYGYPKNEIEYKWKKPSVEVADPKYWRLYQFAFVGLRNSTEISHTISGDYIIMTIFFDLSRRMGYFTIQTYIPCILTVVLSWVSFWINKDAVPARTSLGITTVLTMTTLSTIARKSLPKVSYVTAMDLFVSVCFIFVFAALMEYGTLHYFTSNNKGKTTRGRKLKNKTSASPGLHAGSTLIPMNSISLPQGEDDYGYQCLEGKDCTSFFCCFDDCRTGSWREGRIHIRIAKIDSYSRIFFPTAFALFNLVYWVGYLYL</sequence>
<protein>
    <recommendedName>
        <fullName>Gamma-aminobutyric acid receptor subunit gamma-1</fullName>
    </recommendedName>
    <alternativeName>
        <fullName>GABA(A) receptor subunit gamma-1</fullName>
        <shortName>GABAAR subunit gamma-1</shortName>
    </alternativeName>
</protein>
<gene>
    <name evidence="10" type="primary">Gabrg1</name>
</gene>
<feature type="signal peptide" evidence="7">
    <location>
        <begin position="1"/>
        <end position="20"/>
    </location>
</feature>
<feature type="chain" id="PRO_0000000474" description="Gamma-aminobutyric acid receptor subunit gamma-1">
    <location>
        <begin position="21"/>
        <end position="465"/>
    </location>
</feature>
<feature type="topological domain" description="Extracellular" evidence="9">
    <location>
        <begin position="21"/>
        <end position="273"/>
    </location>
</feature>
<feature type="transmembrane region" description="Helical" evidence="7">
    <location>
        <begin position="274"/>
        <end position="294"/>
    </location>
</feature>
<feature type="topological domain" description="Cytoplasmic" evidence="9">
    <location>
        <begin position="295"/>
        <end position="300"/>
    </location>
</feature>
<feature type="transmembrane region" description="Helical" evidence="7">
    <location>
        <begin position="301"/>
        <end position="320"/>
    </location>
</feature>
<feature type="topological domain" description="Extracellular" evidence="9">
    <location>
        <begin position="321"/>
        <end position="328"/>
    </location>
</feature>
<feature type="transmembrane region" description="Helical" evidence="7">
    <location>
        <begin position="329"/>
        <end position="349"/>
    </location>
</feature>
<feature type="topological domain" description="Cytoplasmic" evidence="9">
    <location>
        <begin position="350"/>
        <end position="444"/>
    </location>
</feature>
<feature type="transmembrane region" description="Helical" evidence="7">
    <location>
        <begin position="445"/>
        <end position="465"/>
    </location>
</feature>
<feature type="glycosylation site" description="N-linked (GlcNAc...) asparagine" evidence="7">
    <location>
        <position position="50"/>
    </location>
</feature>
<feature type="glycosylation site" description="N-linked (GlcNAc...) asparagine" evidence="7">
    <location>
        <position position="127"/>
    </location>
</feature>
<feature type="glycosylation site" description="N-linked (GlcNAc...) asparagine" evidence="7">
    <location>
        <position position="245"/>
    </location>
</feature>
<feature type="disulfide bond" evidence="5">
    <location>
        <begin position="188"/>
        <end position="202"/>
    </location>
</feature>
<feature type="sequence conflict" description="In Ref. 1; CAA38992." evidence="9" ref="1">
    <original>DCRTGSWREGR</original>
    <variation>RLQNWVLEGRA</variation>
    <location>
        <begin position="421"/>
        <end position="431"/>
    </location>
</feature>
<keyword id="KW-1003">Cell membrane</keyword>
<keyword id="KW-0868">Chloride</keyword>
<keyword id="KW-0869">Chloride channel</keyword>
<keyword id="KW-1015">Disulfide bond</keyword>
<keyword id="KW-0325">Glycoprotein</keyword>
<keyword id="KW-0407">Ion channel</keyword>
<keyword id="KW-0406">Ion transport</keyword>
<keyword id="KW-0449">Lipoprotein</keyword>
<keyword id="KW-0472">Membrane</keyword>
<keyword id="KW-0564">Palmitate</keyword>
<keyword id="KW-0628">Postsynaptic cell membrane</keyword>
<keyword id="KW-1185">Reference proteome</keyword>
<keyword id="KW-0732">Signal</keyword>
<keyword id="KW-0770">Synapse</keyword>
<keyword id="KW-0812">Transmembrane</keyword>
<keyword id="KW-1133">Transmembrane helix</keyword>
<keyword id="KW-0813">Transport</keyword>
<accession>Q9R0Y8</accession>
<accession>Q8BHM6</accession>
<comment type="function">
    <text evidence="1 2 4">Gamma subunit of the heteropentameric ligand-gated chloride channel gated by gamma-aminobutyric acid (GABA), a major inhibitory neurotransmitter in the brain (By similarity). GABA-gated chloride channels, also named GABA(A) receptors (GABAAR), consist of five subunits arranged around a central pore and contain GABA active binding site(s) located at the alpha and beta subunit interface(s) (By similarity). When activated by GABA, GABAARs selectively allow the flow of chloride anions across the cell membrane down their electrochemical gradient (By similarity). Chloride influx into the postsynaptic neuron following GABAAR opening decreases the neuron ability to generate a new action potential, thereby reducing nerve transmission (By similarity).</text>
</comment>
<comment type="catalytic activity">
    <reaction evidence="4">
        <text>chloride(in) = chloride(out)</text>
        <dbReference type="Rhea" id="RHEA:29823"/>
        <dbReference type="ChEBI" id="CHEBI:17996"/>
    </reaction>
</comment>
<comment type="subunit">
    <text evidence="6">Heteropentamer, formed by a combination of alpha (GABRA1-6), beta (GABRB1-3), gamma (GABRG1-3), delta (GABRD), epsilon (GABRE), rho (GABRR1-3), pi (GABRP) and theta (GABRQ) chains, each subunit exhibiting distinct physiological and pharmacological properties.</text>
</comment>
<comment type="subcellular location">
    <subcellularLocation>
        <location>Postsynaptic cell membrane</location>
        <topology evidence="7">Multi-pass membrane protein</topology>
    </subcellularLocation>
    <subcellularLocation>
        <location>Cell membrane</location>
        <topology evidence="7">Multi-pass membrane protein</topology>
    </subcellularLocation>
</comment>
<comment type="tissue specificity">
    <text evidence="8">Expressed in brain.</text>
</comment>
<comment type="domain">
    <text evidence="2">GABAARs subunits share a common topological structure: a peptide sequence made up of a long extracellular N-terminal, four transmembrane domains, intracellular or cytoplasmic domain located between the third and the fourth transmembrane domains.</text>
</comment>
<comment type="PTM">
    <text evidence="3">May be palmitoylated.</text>
</comment>
<comment type="similarity">
    <text evidence="9">Belongs to the ligand-gated ion channel (TC 1.A.9) family. Gamma-aminobutyric acid receptor (TC 1.A.9.5) subfamily. GABRG1 sub-subfamily.</text>
</comment>
<name>GBRG1_MOUSE</name>
<dbReference type="EMBL" id="X55272">
    <property type="protein sequence ID" value="CAA38992.1"/>
    <property type="molecule type" value="mRNA"/>
</dbReference>
<dbReference type="EMBL" id="AK034332">
    <property type="protein sequence ID" value="BAC28677.1"/>
    <property type="molecule type" value="mRNA"/>
</dbReference>
<dbReference type="EMBL" id="AK047752">
    <property type="protein sequence ID" value="BAC33146.1"/>
    <property type="molecule type" value="mRNA"/>
</dbReference>
<dbReference type="EMBL" id="AK049956">
    <property type="protein sequence ID" value="BAC34006.1"/>
    <property type="molecule type" value="mRNA"/>
</dbReference>
<dbReference type="EMBL" id="AK038468">
    <property type="protein sequence ID" value="BAE43302.1"/>
    <property type="molecule type" value="mRNA"/>
</dbReference>
<dbReference type="EMBL" id="AC068252">
    <property type="status" value="NOT_ANNOTATED_CDS"/>
    <property type="molecule type" value="Genomic_DNA"/>
</dbReference>
<dbReference type="EMBL" id="AC092716">
    <property type="status" value="NOT_ANNOTATED_CDS"/>
    <property type="molecule type" value="Genomic_DNA"/>
</dbReference>
<dbReference type="EMBL" id="CH466524">
    <property type="protein sequence ID" value="EDL37806.1"/>
    <property type="molecule type" value="Genomic_DNA"/>
</dbReference>
<dbReference type="EMBL" id="BC099939">
    <property type="protein sequence ID" value="AAH99939.1"/>
    <property type="molecule type" value="mRNA"/>
</dbReference>
<dbReference type="CCDS" id="CCDS19326.1"/>
<dbReference type="RefSeq" id="NP_034382.2">
    <property type="nucleotide sequence ID" value="NM_010252.4"/>
</dbReference>
<dbReference type="SMR" id="Q9R0Y8"/>
<dbReference type="BioGRID" id="199807">
    <property type="interactions" value="3"/>
</dbReference>
<dbReference type="FunCoup" id="Q9R0Y8">
    <property type="interactions" value="431"/>
</dbReference>
<dbReference type="STRING" id="10090.ENSMUSP00000031119"/>
<dbReference type="ChEMBL" id="CHEMBL2094133"/>
<dbReference type="DrugCentral" id="Q9R0Y8"/>
<dbReference type="GlyCosmos" id="Q9R0Y8">
    <property type="glycosylation" value="3 sites, No reported glycans"/>
</dbReference>
<dbReference type="GlyGen" id="Q9R0Y8">
    <property type="glycosylation" value="4 sites, 2 N-linked glycans (2 sites), 1 O-linked glycan (1 site)"/>
</dbReference>
<dbReference type="iPTMnet" id="Q9R0Y8"/>
<dbReference type="PhosphoSitePlus" id="Q9R0Y8"/>
<dbReference type="SwissPalm" id="Q9R0Y8"/>
<dbReference type="PaxDb" id="10090-ENSMUSP00000031119"/>
<dbReference type="ProteomicsDB" id="266782"/>
<dbReference type="Antibodypedia" id="23729">
    <property type="antibodies" value="138 antibodies from 27 providers"/>
</dbReference>
<dbReference type="DNASU" id="14405"/>
<dbReference type="Ensembl" id="ENSMUST00000031119.6">
    <property type="protein sequence ID" value="ENSMUSP00000031119.2"/>
    <property type="gene ID" value="ENSMUSG00000001260.11"/>
</dbReference>
<dbReference type="GeneID" id="14405"/>
<dbReference type="KEGG" id="mmu:14405"/>
<dbReference type="UCSC" id="uc008xqr.1">
    <property type="organism name" value="mouse"/>
</dbReference>
<dbReference type="AGR" id="MGI:103156"/>
<dbReference type="CTD" id="2565"/>
<dbReference type="MGI" id="MGI:103156">
    <property type="gene designation" value="Gabrg1"/>
</dbReference>
<dbReference type="VEuPathDB" id="HostDB:ENSMUSG00000001260"/>
<dbReference type="eggNOG" id="KOG3642">
    <property type="taxonomic scope" value="Eukaryota"/>
</dbReference>
<dbReference type="GeneTree" id="ENSGT00940000160193"/>
<dbReference type="HOGENOM" id="CLU_010920_2_0_1"/>
<dbReference type="InParanoid" id="Q9R0Y8"/>
<dbReference type="OMA" id="MGSWEAF"/>
<dbReference type="OrthoDB" id="203862at2759"/>
<dbReference type="PhylomeDB" id="Q9R0Y8"/>
<dbReference type="TreeFam" id="TF315453"/>
<dbReference type="BioGRID-ORCS" id="14405">
    <property type="hits" value="1 hit in 77 CRISPR screens"/>
</dbReference>
<dbReference type="PRO" id="PR:Q9R0Y8"/>
<dbReference type="Proteomes" id="UP000000589">
    <property type="component" value="Chromosome 5"/>
</dbReference>
<dbReference type="RNAct" id="Q9R0Y8">
    <property type="molecule type" value="protein"/>
</dbReference>
<dbReference type="Bgee" id="ENSMUSG00000001260">
    <property type="expression patterns" value="Expressed in subparaventricular zone and 70 other cell types or tissues"/>
</dbReference>
<dbReference type="ExpressionAtlas" id="Q9R0Y8">
    <property type="expression patterns" value="baseline and differential"/>
</dbReference>
<dbReference type="GO" id="GO:0034707">
    <property type="term" value="C:chloride channel complex"/>
    <property type="evidence" value="ECO:0007669"/>
    <property type="project" value="UniProtKB-KW"/>
</dbReference>
<dbReference type="GO" id="GO:0045211">
    <property type="term" value="C:postsynaptic membrane"/>
    <property type="evidence" value="ECO:0007669"/>
    <property type="project" value="UniProtKB-SubCell"/>
</dbReference>
<dbReference type="GO" id="GO:0043235">
    <property type="term" value="C:receptor complex"/>
    <property type="evidence" value="ECO:0007669"/>
    <property type="project" value="Ensembl"/>
</dbReference>
<dbReference type="GO" id="GO:0005254">
    <property type="term" value="F:chloride channel activity"/>
    <property type="evidence" value="ECO:0007669"/>
    <property type="project" value="UniProtKB-KW"/>
</dbReference>
<dbReference type="GO" id="GO:0005230">
    <property type="term" value="F:extracellular ligand-gated monoatomic ion channel activity"/>
    <property type="evidence" value="ECO:0007669"/>
    <property type="project" value="InterPro"/>
</dbReference>
<dbReference type="GO" id="GO:0050811">
    <property type="term" value="F:GABA receptor binding"/>
    <property type="evidence" value="ECO:0007669"/>
    <property type="project" value="Ensembl"/>
</dbReference>
<dbReference type="GO" id="GO:0004890">
    <property type="term" value="F:GABA-A receptor activity"/>
    <property type="evidence" value="ECO:0007669"/>
    <property type="project" value="Ensembl"/>
</dbReference>
<dbReference type="GO" id="GO:0007268">
    <property type="term" value="P:chemical synaptic transmission"/>
    <property type="evidence" value="ECO:0000314"/>
    <property type="project" value="MGI"/>
</dbReference>
<dbReference type="GO" id="GO:0007214">
    <property type="term" value="P:gamma-aminobutyric acid signaling pathway"/>
    <property type="evidence" value="ECO:0007669"/>
    <property type="project" value="InterPro"/>
</dbReference>
<dbReference type="CDD" id="cd19000">
    <property type="entry name" value="LGIC_ECD_GABAAR_G"/>
    <property type="match status" value="1"/>
</dbReference>
<dbReference type="CDD" id="cd19054">
    <property type="entry name" value="LGIC_TM_GABAAR_gamma"/>
    <property type="match status" value="1"/>
</dbReference>
<dbReference type="FunFam" id="2.70.170.10:FF:000003">
    <property type="entry name" value="Putative gamma-aminobutyric acid receptor subunit gamma-2"/>
    <property type="match status" value="1"/>
</dbReference>
<dbReference type="Gene3D" id="2.70.170.10">
    <property type="entry name" value="Neurotransmitter-gated ion-channel ligand-binding domain"/>
    <property type="match status" value="1"/>
</dbReference>
<dbReference type="Gene3D" id="1.20.58.390">
    <property type="entry name" value="Neurotransmitter-gated ion-channel transmembrane domain"/>
    <property type="match status" value="1"/>
</dbReference>
<dbReference type="InterPro" id="IPR006028">
    <property type="entry name" value="GABAA/Glycine_rcpt"/>
</dbReference>
<dbReference type="InterPro" id="IPR005438">
    <property type="entry name" value="GABBAg1_rcpt"/>
</dbReference>
<dbReference type="InterPro" id="IPR005437">
    <property type="entry name" value="GABRG-1/4"/>
</dbReference>
<dbReference type="InterPro" id="IPR006202">
    <property type="entry name" value="Neur_chan_lig-bd"/>
</dbReference>
<dbReference type="InterPro" id="IPR036734">
    <property type="entry name" value="Neur_chan_lig-bd_sf"/>
</dbReference>
<dbReference type="InterPro" id="IPR006201">
    <property type="entry name" value="Neur_channel"/>
</dbReference>
<dbReference type="InterPro" id="IPR036719">
    <property type="entry name" value="Neuro-gated_channel_TM_sf"/>
</dbReference>
<dbReference type="InterPro" id="IPR038050">
    <property type="entry name" value="Neuro_actylchol_rec"/>
</dbReference>
<dbReference type="InterPro" id="IPR006029">
    <property type="entry name" value="Neurotrans-gated_channel_TM"/>
</dbReference>
<dbReference type="InterPro" id="IPR018000">
    <property type="entry name" value="Neurotransmitter_ion_chnl_CS"/>
</dbReference>
<dbReference type="NCBIfam" id="TIGR00860">
    <property type="entry name" value="LIC"/>
    <property type="match status" value="1"/>
</dbReference>
<dbReference type="PANTHER" id="PTHR18945">
    <property type="entry name" value="NEUROTRANSMITTER GATED ION CHANNEL"/>
    <property type="match status" value="1"/>
</dbReference>
<dbReference type="Pfam" id="PF02931">
    <property type="entry name" value="Neur_chan_LBD"/>
    <property type="match status" value="1"/>
</dbReference>
<dbReference type="Pfam" id="PF02932">
    <property type="entry name" value="Neur_chan_memb"/>
    <property type="match status" value="2"/>
</dbReference>
<dbReference type="PRINTS" id="PR00253">
    <property type="entry name" value="GABAARECEPTR"/>
</dbReference>
<dbReference type="PRINTS" id="PR01620">
    <property type="entry name" value="GABAARGAMMA"/>
</dbReference>
<dbReference type="PRINTS" id="PR01621">
    <property type="entry name" value="GABAARGAMMA1"/>
</dbReference>
<dbReference type="PRINTS" id="PR00252">
    <property type="entry name" value="NRIONCHANNEL"/>
</dbReference>
<dbReference type="SUPFAM" id="SSF90112">
    <property type="entry name" value="Neurotransmitter-gated ion-channel transmembrane pore"/>
    <property type="match status" value="1"/>
</dbReference>
<dbReference type="SUPFAM" id="SSF63712">
    <property type="entry name" value="Nicotinic receptor ligand binding domain-like"/>
    <property type="match status" value="1"/>
</dbReference>
<dbReference type="PROSITE" id="PS00236">
    <property type="entry name" value="NEUROTR_ION_CHANNEL"/>
    <property type="match status" value="1"/>
</dbReference>
<evidence type="ECO:0000250" key="1">
    <source>
        <dbReference type="UniProtKB" id="P08219"/>
    </source>
</evidence>
<evidence type="ECO:0000250" key="2">
    <source>
        <dbReference type="UniProtKB" id="P18507"/>
    </source>
</evidence>
<evidence type="ECO:0000250" key="3">
    <source>
        <dbReference type="UniProtKB" id="P22723"/>
    </source>
</evidence>
<evidence type="ECO:0000250" key="4">
    <source>
        <dbReference type="UniProtKB" id="P23574"/>
    </source>
</evidence>
<evidence type="ECO:0000250" key="5">
    <source>
        <dbReference type="UniProtKB" id="P28472"/>
    </source>
</evidence>
<evidence type="ECO:0000250" key="6">
    <source>
        <dbReference type="UniProtKB" id="Q8N1C3"/>
    </source>
</evidence>
<evidence type="ECO:0000255" key="7"/>
<evidence type="ECO:0000269" key="8">
    <source>
    </source>
</evidence>
<evidence type="ECO:0000305" key="9"/>
<evidence type="ECO:0000312" key="10">
    <source>
        <dbReference type="MGI" id="MGI:103156"/>
    </source>
</evidence>